<reference evidence="5" key="1">
    <citation type="journal article" date="2013" name="Regul. Pept.">
        <title>PsT-1: a new tryptophyllin peptide from the skin secretion of Waxy Monkey Leaf Frog, Phyllomedusa sauvagei.</title>
        <authorList>
            <person name="Wang R."/>
            <person name="Chen T."/>
            <person name="Zhou M."/>
            <person name="Wang L."/>
            <person name="Shaw C."/>
        </authorList>
    </citation>
    <scope>NUCLEOTIDE SEQUENCE [MRNA]</scope>
    <scope>PROTEIN SEQUENCE OF 54-61</scope>
    <scope>SYNTHESIS</scope>
    <scope>FUNCTION</scope>
    <scope>MASS SPECTROMETRY</scope>
    <source>
        <tissue evidence="3">Skin secretion</tissue>
    </source>
</reference>
<name>TY01_PHYSA</name>
<evidence type="ECO:0000255" key="1"/>
<evidence type="ECO:0000256" key="2">
    <source>
        <dbReference type="SAM" id="MobiDB-lite"/>
    </source>
</evidence>
<evidence type="ECO:0000269" key="3">
    <source>
    </source>
</evidence>
<evidence type="ECO:0000303" key="4">
    <source>
    </source>
</evidence>
<evidence type="ECO:0000305" key="5"/>
<keyword id="KW-0878">Amphibian defense peptide</keyword>
<keyword id="KW-0903">Direct protein sequencing</keyword>
<keyword id="KW-0964">Secreted</keyword>
<keyword id="KW-0732">Signal</keyword>
<feature type="signal peptide" evidence="1">
    <location>
        <begin position="1"/>
        <end position="22"/>
    </location>
</feature>
<feature type="propeptide" id="PRO_0000424895" evidence="3">
    <location>
        <begin position="23"/>
        <end position="53"/>
    </location>
</feature>
<feature type="peptide" id="PRO_0000424896" description="Tryptophyllin-1" evidence="3">
    <location>
        <begin position="54"/>
        <end position="61"/>
    </location>
</feature>
<feature type="region of interest" description="Disordered" evidence="2">
    <location>
        <begin position="24"/>
        <end position="61"/>
    </location>
</feature>
<feature type="compositionally biased region" description="Basic and acidic residues" evidence="2">
    <location>
        <begin position="36"/>
        <end position="55"/>
    </location>
</feature>
<accession>C0HJF6</accession>
<sequence>MDILKKSLFLALFLGLVSISFCDEEKRQDDDESNESEEKKEIHEEGSQEERREKPPPWVPV</sequence>
<dbReference type="GO" id="GO:0005576">
    <property type="term" value="C:extracellular region"/>
    <property type="evidence" value="ECO:0007669"/>
    <property type="project" value="UniProtKB-SubCell"/>
</dbReference>
<dbReference type="GO" id="GO:0006952">
    <property type="term" value="P:defense response"/>
    <property type="evidence" value="ECO:0007669"/>
    <property type="project" value="UniProtKB-KW"/>
</dbReference>
<dbReference type="InterPro" id="IPR004275">
    <property type="entry name" value="Frog_antimicrobial_propeptide"/>
</dbReference>
<dbReference type="Pfam" id="PF03032">
    <property type="entry name" value="FSAP_sig_propep"/>
    <property type="match status" value="1"/>
</dbReference>
<comment type="function">
    <text evidence="3">The synthetic peptide inhibits bradykinin-induced relaxation of rat tail artery smooth muscle, and also has anti-proliferative effects on the human prostate cancer cell lines LNCaP, PC3 and DU145.</text>
</comment>
<comment type="subcellular location">
    <subcellularLocation>
        <location evidence="3">Secreted</location>
    </subcellularLocation>
</comment>
<comment type="tissue specificity">
    <text evidence="5">Expressed by the skin glands.</text>
</comment>
<comment type="mass spectrometry"/>
<comment type="similarity">
    <text evidence="1">Belongs to the frog skin active peptide (FSAP) family. Tryptophillin subfamily.</text>
</comment>
<proteinExistence type="evidence at protein level"/>
<organism>
    <name type="scientific">Phyllomedusa sauvagei</name>
    <name type="common">Sauvage's leaf frog</name>
    <dbReference type="NCBI Taxonomy" id="8395"/>
    <lineage>
        <taxon>Eukaryota</taxon>
        <taxon>Metazoa</taxon>
        <taxon>Chordata</taxon>
        <taxon>Craniata</taxon>
        <taxon>Vertebrata</taxon>
        <taxon>Euteleostomi</taxon>
        <taxon>Amphibia</taxon>
        <taxon>Batrachia</taxon>
        <taxon>Anura</taxon>
        <taxon>Neobatrachia</taxon>
        <taxon>Hyloidea</taxon>
        <taxon>Hylidae</taxon>
        <taxon>Phyllomedusinae</taxon>
        <taxon>Phyllomedusa</taxon>
    </lineage>
</organism>
<protein>
    <recommendedName>
        <fullName evidence="4">Tryptophyllin-1</fullName>
        <shortName evidence="4">PsT-1</shortName>
    </recommendedName>
</protein>